<organism>
    <name type="scientific">Pan troglodytes</name>
    <name type="common">Chimpanzee</name>
    <dbReference type="NCBI Taxonomy" id="9598"/>
    <lineage>
        <taxon>Eukaryota</taxon>
        <taxon>Metazoa</taxon>
        <taxon>Chordata</taxon>
        <taxon>Craniata</taxon>
        <taxon>Vertebrata</taxon>
        <taxon>Euteleostomi</taxon>
        <taxon>Mammalia</taxon>
        <taxon>Eutheria</taxon>
        <taxon>Euarchontoglires</taxon>
        <taxon>Primates</taxon>
        <taxon>Haplorrhini</taxon>
        <taxon>Catarrhini</taxon>
        <taxon>Hominidae</taxon>
        <taxon>Pan</taxon>
    </lineage>
</organism>
<feature type="signal peptide" evidence="2">
    <location>
        <begin position="1"/>
        <end position="29"/>
    </location>
</feature>
<feature type="chain" id="PRO_0000003971" description="Protocadherin gamma-A12">
    <location>
        <begin position="30"/>
        <end position="932"/>
    </location>
</feature>
<feature type="topological domain" description="Extracellular" evidence="2">
    <location>
        <begin position="30"/>
        <end position="692"/>
    </location>
</feature>
<feature type="transmembrane region" description="Helical" evidence="2">
    <location>
        <begin position="693"/>
        <end position="713"/>
    </location>
</feature>
<feature type="topological domain" description="Cytoplasmic" evidence="2">
    <location>
        <begin position="714"/>
        <end position="932"/>
    </location>
</feature>
<feature type="domain" description="Cadherin 1" evidence="3">
    <location>
        <begin position="30"/>
        <end position="133"/>
    </location>
</feature>
<feature type="domain" description="Cadherin 2" evidence="3">
    <location>
        <begin position="134"/>
        <end position="242"/>
    </location>
</feature>
<feature type="domain" description="Cadherin 3" evidence="3">
    <location>
        <begin position="243"/>
        <end position="347"/>
    </location>
</feature>
<feature type="domain" description="Cadherin 4" evidence="3">
    <location>
        <begin position="348"/>
        <end position="452"/>
    </location>
</feature>
<feature type="domain" description="Cadherin 5" evidence="3">
    <location>
        <begin position="453"/>
        <end position="562"/>
    </location>
</feature>
<feature type="domain" description="Cadherin 6" evidence="3">
    <location>
        <begin position="570"/>
        <end position="683"/>
    </location>
</feature>
<feature type="region of interest" description="Disordered" evidence="4">
    <location>
        <begin position="803"/>
        <end position="841"/>
    </location>
</feature>
<feature type="region of interest" description="Disordered" evidence="4">
    <location>
        <begin position="902"/>
        <end position="932"/>
    </location>
</feature>
<feature type="compositionally biased region" description="Polar residues" evidence="4">
    <location>
        <begin position="816"/>
        <end position="841"/>
    </location>
</feature>
<feature type="compositionally biased region" description="Basic residues" evidence="4">
    <location>
        <begin position="922"/>
        <end position="932"/>
    </location>
</feature>
<feature type="glycosylation site" description="N-linked (GlcNAc...) asparagine" evidence="2">
    <location>
        <position position="265"/>
    </location>
</feature>
<feature type="glycosylation site" description="N-linked (GlcNAc...) asparagine" evidence="2">
    <location>
        <position position="419"/>
    </location>
</feature>
<feature type="glycosylation site" description="N-linked (GlcNAc...) asparagine" evidence="2">
    <location>
        <position position="545"/>
    </location>
</feature>
<sequence length="932" mass="100906">MIPARLHRDYKGLVLLGILLGTLWETGCTQIRYSVPEELEKGSRVGDISRDLGLEPRELAERGVRIIPRGRTQLFALNPRSGSLVTAGRIDREELCMGAIKCQLNLDILMEDKVKIYGVEVEVRDINDNAPYFRESELEIKISENAATEMRFPLPHAWDPDIGKNSLQSYELSPNTHFSLIVQNGADGSKYPELVLKRALDREEKAAHHLVLTASDGGDPVRTGTARIRVMVLDANDNAPAFAQPEYRASVPENLALGTQLLVVNATDPDEGVNAEVRYSFRSVDDKAAQVFKLDCNSGTISTIGELDHEESGFYQMEVQAMDNAGYSARAKVLITVLDVNDNAPEVVLTSLASSVPENSPRGTLIALLNVNDQDSEENGQVICFIQGNLPFKLEKSYGNYYSLVTDIVLDREQVPSYNITVTATDRGTPPLSTETHISLNVADTNDNPPVFPQASYSAYIPENNPRGVSLVSVTAHDPDCEENAQITYSLAENTIQGASLSSYVSINSDTGVLYALSSFDYEQFRDLQVKVMARDNGHPPLSSNVSLSLFVLDQNDNAPEILYPALPTDGSTSVELAPRSAEPGYLVTKVVAVDRDSGQNAWLSYRLLKASEPGLFSVGLHTGEVRTARALLDRDALKQSLVVAVQDHGQPPLSATVTLTVAVANSIPQVLADLGSLESPANSETSDLTLYLVVAVAAVSCVFLAFVILLLALRLRRWHKSRLLQASGGGLTGAPASHFVGVDGVQAFLQTYSHEVSLTTDSRRSHLIFPQPNYADMLVSQESFEKSEPLLLSGDSVFSKDGHGLIEQAPPNTDWRFSQAQRPGTSGSQNGDDTGTWPNNQFDTEMLQAMILASASEAADGSSTLGGGAGTMGLSARYGPQFTLQHVPDYRQNVYIPGSNATLTNAAGKRDGKAPAGGNGNKKKSGKKEKK</sequence>
<reference key="1">
    <citation type="journal article" date="2005" name="Nature">
        <title>Initial sequence of the chimpanzee genome and comparison with the human genome.</title>
        <authorList>
            <consortium name="Chimpanzee sequencing and analysis consortium"/>
        </authorList>
    </citation>
    <scope>NUCLEOTIDE SEQUENCE [LARGE SCALE GENOMIC DNA]</scope>
</reference>
<reference key="2">
    <citation type="journal article" date="2005" name="Genetics">
        <title>Comparative genomics and diversifying selection of the clustered vertebrate protocadherin genes.</title>
        <authorList>
            <person name="Wu Q."/>
        </authorList>
    </citation>
    <scope>IDENTIFICATION</scope>
</reference>
<comment type="function">
    <text>Potential calcium-dependent cell-adhesion protein. May be involved in the establishment and maintenance of specific neuronal connections in the brain.</text>
</comment>
<comment type="subcellular location">
    <subcellularLocation>
        <location evidence="1">Cell membrane</location>
        <topology evidence="1">Single-pass type I membrane protein</topology>
    </subcellularLocation>
</comment>
<proteinExistence type="inferred from homology"/>
<protein>
    <recommendedName>
        <fullName>Protocadherin gamma-A12</fullName>
        <shortName>PCDH-gamma-A12</shortName>
    </recommendedName>
</protein>
<name>PCDGC_PANTR</name>
<dbReference type="SMR" id="Q5DRB9"/>
<dbReference type="FunCoup" id="Q5DRB9">
    <property type="interactions" value="64"/>
</dbReference>
<dbReference type="GlyCosmos" id="Q5DRB9">
    <property type="glycosylation" value="3 sites, No reported glycans"/>
</dbReference>
<dbReference type="Ensembl" id="ENSPTRT00000032096.5">
    <property type="protein sequence ID" value="ENSPTRP00000029650.5"/>
    <property type="gene ID" value="ENSPTRG00000017346.7"/>
</dbReference>
<dbReference type="GeneTree" id="ENSGT00940000162232"/>
<dbReference type="InParanoid" id="Q5DRB9"/>
<dbReference type="Proteomes" id="UP000002277">
    <property type="component" value="Chromosome 5"/>
</dbReference>
<dbReference type="Bgee" id="ENSPTRG00000017346">
    <property type="expression patterns" value="Expressed in dorsolateral prefrontal cortex and 21 other cell types or tissues"/>
</dbReference>
<dbReference type="GO" id="GO:0005886">
    <property type="term" value="C:plasma membrane"/>
    <property type="evidence" value="ECO:0007669"/>
    <property type="project" value="UniProtKB-SubCell"/>
</dbReference>
<dbReference type="GO" id="GO:0005509">
    <property type="term" value="F:calcium ion binding"/>
    <property type="evidence" value="ECO:0007669"/>
    <property type="project" value="InterPro"/>
</dbReference>
<dbReference type="GO" id="GO:0007156">
    <property type="term" value="P:homophilic cell adhesion via plasma membrane adhesion molecules"/>
    <property type="evidence" value="ECO:0007669"/>
    <property type="project" value="InterPro"/>
</dbReference>
<dbReference type="GO" id="GO:0007399">
    <property type="term" value="P:nervous system development"/>
    <property type="evidence" value="ECO:0007669"/>
    <property type="project" value="UniProtKB-ARBA"/>
</dbReference>
<dbReference type="CDD" id="cd11304">
    <property type="entry name" value="Cadherin_repeat"/>
    <property type="match status" value="6"/>
</dbReference>
<dbReference type="FunFam" id="2.60.40.60:FF:000004">
    <property type="entry name" value="Protocadherin 1 gamma 2"/>
    <property type="match status" value="1"/>
</dbReference>
<dbReference type="FunFam" id="2.60.40.60:FF:000001">
    <property type="entry name" value="Protocadherin alpha 2"/>
    <property type="match status" value="1"/>
</dbReference>
<dbReference type="FunFam" id="2.60.40.60:FF:000002">
    <property type="entry name" value="Protocadherin alpha 2"/>
    <property type="match status" value="1"/>
</dbReference>
<dbReference type="FunFam" id="2.60.40.60:FF:000006">
    <property type="entry name" value="Protocadherin alpha 2"/>
    <property type="match status" value="1"/>
</dbReference>
<dbReference type="FunFam" id="2.60.40.60:FF:000129">
    <property type="entry name" value="protocadherin alpha-C2 isoform X1"/>
    <property type="match status" value="1"/>
</dbReference>
<dbReference type="FunFam" id="2.60.40.60:FF:000018">
    <property type="entry name" value="Protocadherin gamma c3"/>
    <property type="match status" value="1"/>
</dbReference>
<dbReference type="Gene3D" id="2.60.40.60">
    <property type="entry name" value="Cadherins"/>
    <property type="match status" value="6"/>
</dbReference>
<dbReference type="InterPro" id="IPR002126">
    <property type="entry name" value="Cadherin-like_dom"/>
</dbReference>
<dbReference type="InterPro" id="IPR015919">
    <property type="entry name" value="Cadherin-like_sf"/>
</dbReference>
<dbReference type="InterPro" id="IPR032455">
    <property type="entry name" value="Cadherin_C"/>
</dbReference>
<dbReference type="InterPro" id="IPR031904">
    <property type="entry name" value="Cadherin_CBD"/>
</dbReference>
<dbReference type="InterPro" id="IPR020894">
    <property type="entry name" value="Cadherin_CS"/>
</dbReference>
<dbReference type="InterPro" id="IPR013164">
    <property type="entry name" value="Cadherin_N"/>
</dbReference>
<dbReference type="InterPro" id="IPR050174">
    <property type="entry name" value="Protocadherin/Cadherin-CA"/>
</dbReference>
<dbReference type="PANTHER" id="PTHR24028">
    <property type="entry name" value="CADHERIN-87A"/>
    <property type="match status" value="1"/>
</dbReference>
<dbReference type="PANTHER" id="PTHR24028:SF227">
    <property type="entry name" value="PROTOCADHERIN GAMMA-A12"/>
    <property type="match status" value="1"/>
</dbReference>
<dbReference type="Pfam" id="PF00028">
    <property type="entry name" value="Cadherin"/>
    <property type="match status" value="5"/>
</dbReference>
<dbReference type="Pfam" id="PF08266">
    <property type="entry name" value="Cadherin_2"/>
    <property type="match status" value="1"/>
</dbReference>
<dbReference type="Pfam" id="PF16492">
    <property type="entry name" value="Cadherin_C_2"/>
    <property type="match status" value="1"/>
</dbReference>
<dbReference type="Pfam" id="PF15974">
    <property type="entry name" value="Cadherin_tail"/>
    <property type="match status" value="1"/>
</dbReference>
<dbReference type="PRINTS" id="PR00205">
    <property type="entry name" value="CADHERIN"/>
</dbReference>
<dbReference type="SMART" id="SM00112">
    <property type="entry name" value="CA"/>
    <property type="match status" value="6"/>
</dbReference>
<dbReference type="SUPFAM" id="SSF49313">
    <property type="entry name" value="Cadherin-like"/>
    <property type="match status" value="6"/>
</dbReference>
<dbReference type="PROSITE" id="PS00232">
    <property type="entry name" value="CADHERIN_1"/>
    <property type="match status" value="5"/>
</dbReference>
<dbReference type="PROSITE" id="PS50268">
    <property type="entry name" value="CADHERIN_2"/>
    <property type="match status" value="6"/>
</dbReference>
<accession>Q5DRB9</accession>
<evidence type="ECO:0000250" key="1"/>
<evidence type="ECO:0000255" key="2"/>
<evidence type="ECO:0000255" key="3">
    <source>
        <dbReference type="PROSITE-ProRule" id="PRU00043"/>
    </source>
</evidence>
<evidence type="ECO:0000256" key="4">
    <source>
        <dbReference type="SAM" id="MobiDB-lite"/>
    </source>
</evidence>
<keyword id="KW-0106">Calcium</keyword>
<keyword id="KW-0130">Cell adhesion</keyword>
<keyword id="KW-1003">Cell membrane</keyword>
<keyword id="KW-0325">Glycoprotein</keyword>
<keyword id="KW-0472">Membrane</keyword>
<keyword id="KW-1185">Reference proteome</keyword>
<keyword id="KW-0677">Repeat</keyword>
<keyword id="KW-0732">Signal</keyword>
<keyword id="KW-0812">Transmembrane</keyword>
<keyword id="KW-1133">Transmembrane helix</keyword>
<gene>
    <name type="primary">PCDHGA12</name>
</gene>